<protein>
    <recommendedName>
        <fullName evidence="2">Nonsense-mediated mRNA decay factor SMG8</fullName>
    </recommendedName>
    <alternativeName>
        <fullName>Protein smg-8 homolog</fullName>
    </alternativeName>
</protein>
<dbReference type="EMBL" id="BC121322">
    <property type="protein sequence ID" value="AAI21323.1"/>
    <property type="molecule type" value="mRNA"/>
</dbReference>
<dbReference type="RefSeq" id="NP_001072291.1">
    <property type="nucleotide sequence ID" value="NM_001078823.1"/>
</dbReference>
<dbReference type="SMR" id="Q0VA04"/>
<dbReference type="FunCoup" id="Q0VA04">
    <property type="interactions" value="1648"/>
</dbReference>
<dbReference type="STRING" id="8364.ENSXETP00000024885"/>
<dbReference type="PaxDb" id="8364-ENSXETP00000002451"/>
<dbReference type="GeneID" id="779744"/>
<dbReference type="KEGG" id="xtr:779744"/>
<dbReference type="AGR" id="Xenbase:XB-GENE-965595"/>
<dbReference type="CTD" id="55181"/>
<dbReference type="Xenbase" id="XB-GENE-965595">
    <property type="gene designation" value="smg8"/>
</dbReference>
<dbReference type="eggNOG" id="KOG3692">
    <property type="taxonomic scope" value="Eukaryota"/>
</dbReference>
<dbReference type="HOGENOM" id="CLU_008116_0_0_1"/>
<dbReference type="InParanoid" id="Q0VA04"/>
<dbReference type="OMA" id="MHSGCPK"/>
<dbReference type="OrthoDB" id="63589at2759"/>
<dbReference type="PhylomeDB" id="Q0VA04"/>
<dbReference type="TreeFam" id="TF323445"/>
<dbReference type="Reactome" id="R-XTR-975957">
    <property type="pathway name" value="Nonsense Mediated Decay (NMD) enhanced by the Exon Junction Complex (EJC)"/>
</dbReference>
<dbReference type="Proteomes" id="UP000008143">
    <property type="component" value="Chromosome 2"/>
</dbReference>
<dbReference type="Bgee" id="ENSXETG00000001117">
    <property type="expression patterns" value="Expressed in ovary and 12 other cell types or tissues"/>
</dbReference>
<dbReference type="GO" id="GO:0000184">
    <property type="term" value="P:nuclear-transcribed mRNA catabolic process, nonsense-mediated decay"/>
    <property type="evidence" value="ECO:0000250"/>
    <property type="project" value="UniProtKB"/>
</dbReference>
<dbReference type="GO" id="GO:0045859">
    <property type="term" value="P:regulation of protein kinase activity"/>
    <property type="evidence" value="ECO:0000250"/>
    <property type="project" value="UniProtKB"/>
</dbReference>
<dbReference type="InterPro" id="IPR019354">
    <property type="entry name" value="SMG8-like"/>
</dbReference>
<dbReference type="PANTHER" id="PTHR13091">
    <property type="entry name" value="AMPLIFIED IN BREAST CANCER 2-RELATED"/>
    <property type="match status" value="1"/>
</dbReference>
<dbReference type="PANTHER" id="PTHR13091:SF0">
    <property type="entry name" value="NONSENSE-MEDIATED MRNA DECAY FACTOR SMG8"/>
    <property type="match status" value="1"/>
</dbReference>
<dbReference type="Pfam" id="PF10220">
    <property type="entry name" value="Smg8_Smg9"/>
    <property type="match status" value="1"/>
</dbReference>
<proteinExistence type="evidence at transcript level"/>
<keyword id="KW-0866">Nonsense-mediated mRNA decay</keyword>
<keyword id="KW-1185">Reference proteome</keyword>
<feature type="chain" id="PRO_0000304976" description="Nonsense-mediated mRNA decay factor SMG8">
    <location>
        <begin position="1"/>
        <end position="915"/>
    </location>
</feature>
<feature type="region of interest" description="Disordered" evidence="3">
    <location>
        <begin position="207"/>
        <end position="228"/>
    </location>
</feature>
<feature type="region of interest" description="Disordered" evidence="3">
    <location>
        <begin position="520"/>
        <end position="541"/>
    </location>
</feature>
<feature type="region of interest" description="Disordered" evidence="3">
    <location>
        <begin position="574"/>
        <end position="661"/>
    </location>
</feature>
<feature type="region of interest" description="Disordered" evidence="3">
    <location>
        <begin position="733"/>
        <end position="755"/>
    </location>
</feature>
<feature type="compositionally biased region" description="Basic residues" evidence="3">
    <location>
        <begin position="219"/>
        <end position="228"/>
    </location>
</feature>
<feature type="compositionally biased region" description="Basic and acidic residues" evidence="3">
    <location>
        <begin position="593"/>
        <end position="607"/>
    </location>
</feature>
<feature type="compositionally biased region" description="Polar residues" evidence="3">
    <location>
        <begin position="608"/>
        <end position="629"/>
    </location>
</feature>
<feature type="compositionally biased region" description="Basic and acidic residues" evidence="3">
    <location>
        <begin position="649"/>
        <end position="660"/>
    </location>
</feature>
<accession>Q0VA04</accession>
<organism>
    <name type="scientific">Xenopus tropicalis</name>
    <name type="common">Western clawed frog</name>
    <name type="synonym">Silurana tropicalis</name>
    <dbReference type="NCBI Taxonomy" id="8364"/>
    <lineage>
        <taxon>Eukaryota</taxon>
        <taxon>Metazoa</taxon>
        <taxon>Chordata</taxon>
        <taxon>Craniata</taxon>
        <taxon>Vertebrata</taxon>
        <taxon>Euteleostomi</taxon>
        <taxon>Amphibia</taxon>
        <taxon>Batrachia</taxon>
        <taxon>Anura</taxon>
        <taxon>Pipoidea</taxon>
        <taxon>Pipidae</taxon>
        <taxon>Xenopodinae</taxon>
        <taxon>Xenopus</taxon>
        <taxon>Silurana</taxon>
    </lineage>
</organism>
<sequence>MVVCGGPTVLRDLLGADTEPTWKDEEVCVVGLFGKTALAQGSWHKCSLINSLCDRHIFPLFHRAPERPSERSLFQTYYEQESRVLYVLLAGLSDTGSLLKACEELSRGVSHAEAHEWWKDEEKLYCMHLLYLFSVCHILVLVHPTCCFDITYEKLFRALDSLRQKMLPSLKPSLKDCAVGLDWKLNARPCPPRLLFIFQLNGALKVEPKSQGPQTNEKPKKHSPKRRLQHALEDQIYRIFRKSRVLTNQSINCLFTVPANQAFVYIVADEDEDPVNMLLEGLRHNCTLKDTESLVPISGPRRYQMMRHTRQLSFTVENNTSLSGQLVDCTLREFLFQHVELVLTKKGFDDSVGRNPQPSHFELPTYQKWVSVALKLYEIIIENKDDDPPAFPGGFPPKLLANMKVLEGYLDADTKFSENRCQKALPMAHSAYQSNLPHNYTTTVHKNQLAQALRVYSQHARGPAFHKYAMVLNEDCYKFWSSGHQLCEERSLTDQHCVHKFHLLPKSGEKIEPERNPPILFHNSRARSTGSCNCGKKQAPREDPFDIKSANYDFYQILEEKCCGKLDHITFPIFQPSTPDPAPAKNEASPAAHDGEVEGEKMKDKEPQTQGESTSLSLALSLGQSTDSLGTFPEGPKAGGDNTEASGHGTDEKVEKRPSLVDRQASTVEYLPGMVHLNSPKGLLPKFSSWALVKLGPAKSYNFHTGLDHLGFIPGTSYLMPWDIVIRTKPEDESDLDTNSWPAPNKSIPGKRNSVVMGRGRRRDDIARAFVGFEYEDSRGRRFMCSGPDKIMKAIGNGPKESAIKALNTDMPLYMLSPSQGRGLKPHYAQLMRLFVVVPDAPVQIILAPQVQPGPPPCPVFVPEKQEITLPSDGLWVLRFPFSYASERGPCYSPKENQQLPSYKVMKGILRTVTQ</sequence>
<reference key="1">
    <citation type="submission" date="2006-08" db="EMBL/GenBank/DDBJ databases">
        <authorList>
            <consortium name="NIH - Xenopus Gene Collection (XGC) project"/>
        </authorList>
    </citation>
    <scope>NUCLEOTIDE SEQUENCE [LARGE SCALE MRNA]</scope>
    <source>
        <tissue>Testis</tissue>
    </source>
</reference>
<gene>
    <name type="primary">smg8</name>
</gene>
<evidence type="ECO:0000250" key="1"/>
<evidence type="ECO:0000250" key="2">
    <source>
        <dbReference type="UniProtKB" id="Q8ND04"/>
    </source>
</evidence>
<evidence type="ECO:0000256" key="3">
    <source>
        <dbReference type="SAM" id="MobiDB-lite"/>
    </source>
</evidence>
<evidence type="ECO:0000305" key="4"/>
<name>SMG8_XENTR</name>
<comment type="function">
    <text evidence="1">Involved in nonsense-mediated decay (NMD) of mRNAs containing premature stop codons. Is recruited by release factors to stalled ribosomes together with smg1 and smg9 (forming the SMG1C protein kinase complex) and, in the SMG1C complex, is required to mediate the recruitment of smg1 to the ribosome:SURF complex and to suppress smg1 kinase activity until the ribosome:SURF complex locates the exon junction complex (EJC). Acts as a regulator of kinase activity (By similarity).</text>
</comment>
<comment type="subunit">
    <text evidence="1">Component of the SMG1C complex composed of smg1, smg8 and smg9.</text>
</comment>
<comment type="similarity">
    <text evidence="4">Belongs to the SMG8 family.</text>
</comment>